<evidence type="ECO:0000255" key="1">
    <source>
        <dbReference type="HAMAP-Rule" id="MF_04038"/>
    </source>
</evidence>
<proteinExistence type="inferred from homology"/>
<reference key="1">
    <citation type="journal article" date="1992" name="J. Virol.">
        <title>Primary structure of the herpesvirus saimiri genome.</title>
        <authorList>
            <person name="Albrecht J.-C."/>
            <person name="Nicholas J."/>
            <person name="Biller D."/>
            <person name="Cameron K.R."/>
            <person name="Biesinger B."/>
            <person name="Newman C."/>
            <person name="Wittmann S."/>
            <person name="Craxton M.A."/>
            <person name="Coleman H."/>
            <person name="Fleckenstein B."/>
            <person name="Honess R.W."/>
        </authorList>
    </citation>
    <scope>NUCLEOTIDE SEQUENCE [LARGE SCALE GENOMIC DNA]</scope>
</reference>
<organism>
    <name type="scientific">Saimiriine herpesvirus 2 (strain 11)</name>
    <name type="common">SaHV-2</name>
    <name type="synonym">Herpesvirus saimiri</name>
    <dbReference type="NCBI Taxonomy" id="10383"/>
    <lineage>
        <taxon>Viruses</taxon>
        <taxon>Duplodnaviria</taxon>
        <taxon>Heunggongvirae</taxon>
        <taxon>Peploviricota</taxon>
        <taxon>Herviviricetes</taxon>
        <taxon>Herpesvirales</taxon>
        <taxon>Orthoherpesviridae</taxon>
        <taxon>Gammaherpesvirinae</taxon>
        <taxon>Rhadinovirus</taxon>
        <taxon>Rhadinovirus saimiriinegamma2</taxon>
        <taxon>Saimiriine herpesvirus 2</taxon>
    </lineage>
</organism>
<comment type="function">
    <text evidence="1">Plays a critical role in cytoplasmic virus egress. Participates in the final step of tegumentation and envelope acquisition within the host cytoplasm.</text>
</comment>
<comment type="subcellular location">
    <subcellularLocation>
        <location evidence="1">Virion</location>
    </subcellularLocation>
    <subcellularLocation>
        <location evidence="1">Virion tegument</location>
    </subcellularLocation>
    <subcellularLocation>
        <location evidence="1">Host cytoplasm</location>
    </subcellularLocation>
    <subcellularLocation>
        <location evidence="1">Host Golgi apparatus</location>
    </subcellularLocation>
</comment>
<comment type="similarity">
    <text evidence="1">Belongs to the herpesviridae cytoplasmic envelopment protein 1 family.</text>
</comment>
<accession>Q01028</accession>
<organismHost>
    <name type="scientific">Saimiri sciureus</name>
    <name type="common">Common squirrel monkey</name>
    <dbReference type="NCBI Taxonomy" id="9521"/>
</organismHost>
<feature type="chain" id="PRO_0000115923" description="Cytoplasmic envelopment protein 1">
    <location>
        <begin position="1"/>
        <end position="265"/>
    </location>
</feature>
<sequence>MEVVARVLLGVNKTNMACQEQPIVPRLVLEVNKNKNVCIAANTPCFVVDGVLMVEQLKTHIKSRMFSNKFVGFVMACFVENEDMVDSINMFPHVFSSRLFIYNPCNHILLEMCGLLSMLKNLNTPSSSLLSAIVERAYYLWTKSRCPDATFLLHGIKTLASTSSYFYGINAPVESIVSPLLMFKLYKCIEDGDPVSKGLLKPIYLTSWKMDTQYDAPSKDLSEKCVFNLFYCNTVFTKHLQHKEVLKLFKCVCTTSTPRSNILSQ</sequence>
<dbReference type="EMBL" id="X64346">
    <property type="protein sequence ID" value="CAA45665.1"/>
    <property type="molecule type" value="Genomic_DNA"/>
</dbReference>
<dbReference type="RefSeq" id="NP_040244.1">
    <property type="nucleotide sequence ID" value="NC_001350.1"/>
</dbReference>
<dbReference type="SMR" id="Q01028"/>
<dbReference type="KEGG" id="vg:1682496"/>
<dbReference type="Proteomes" id="UP000000587">
    <property type="component" value="Segment"/>
</dbReference>
<dbReference type="GO" id="GO:0044177">
    <property type="term" value="C:host cell Golgi apparatus"/>
    <property type="evidence" value="ECO:0007669"/>
    <property type="project" value="UniProtKB-SubCell"/>
</dbReference>
<dbReference type="GO" id="GO:0019033">
    <property type="term" value="C:viral tegument"/>
    <property type="evidence" value="ECO:0007669"/>
    <property type="project" value="UniProtKB-SubCell"/>
</dbReference>
<dbReference type="HAMAP" id="MF_04038">
    <property type="entry name" value="HSV_CEP1"/>
    <property type="match status" value="1"/>
</dbReference>
<dbReference type="InterPro" id="IPR002600">
    <property type="entry name" value="Herpes_UL7"/>
</dbReference>
<dbReference type="Pfam" id="PF01677">
    <property type="entry name" value="Herpes_UL7"/>
    <property type="match status" value="1"/>
</dbReference>
<gene>
    <name type="primary">42</name>
</gene>
<keyword id="KW-1035">Host cytoplasm</keyword>
<keyword id="KW-1040">Host Golgi apparatus</keyword>
<keyword id="KW-1185">Reference proteome</keyword>
<keyword id="KW-0946">Virion</keyword>
<keyword id="KW-0920">Virion tegument</keyword>
<protein>
    <recommendedName>
        <fullName evidence="1">Cytoplasmic envelopment protein 1</fullName>
    </recommendedName>
</protein>
<name>CEP1_SHV21</name>